<comment type="function">
    <text evidence="1">Catalyzes the reversible adenylation of nicotinate mononucleotide (NaMN) to nicotinic acid adenine dinucleotide (NaAD).</text>
</comment>
<comment type="catalytic activity">
    <reaction evidence="1">
        <text>nicotinate beta-D-ribonucleotide + ATP + H(+) = deamido-NAD(+) + diphosphate</text>
        <dbReference type="Rhea" id="RHEA:22860"/>
        <dbReference type="ChEBI" id="CHEBI:15378"/>
        <dbReference type="ChEBI" id="CHEBI:30616"/>
        <dbReference type="ChEBI" id="CHEBI:33019"/>
        <dbReference type="ChEBI" id="CHEBI:57502"/>
        <dbReference type="ChEBI" id="CHEBI:58437"/>
        <dbReference type="EC" id="2.7.7.18"/>
    </reaction>
</comment>
<comment type="pathway">
    <text evidence="1">Cofactor biosynthesis; NAD(+) biosynthesis; deamido-NAD(+) from nicotinate D-ribonucleotide: step 1/1.</text>
</comment>
<comment type="similarity">
    <text evidence="1">Belongs to the NadD family.</text>
</comment>
<organism>
    <name type="scientific">Bacillus thuringiensis subsp. konkukian (strain 97-27)</name>
    <dbReference type="NCBI Taxonomy" id="281309"/>
    <lineage>
        <taxon>Bacteria</taxon>
        <taxon>Bacillati</taxon>
        <taxon>Bacillota</taxon>
        <taxon>Bacilli</taxon>
        <taxon>Bacillales</taxon>
        <taxon>Bacillaceae</taxon>
        <taxon>Bacillus</taxon>
        <taxon>Bacillus cereus group</taxon>
    </lineage>
</organism>
<evidence type="ECO:0000255" key="1">
    <source>
        <dbReference type="HAMAP-Rule" id="MF_00244"/>
    </source>
</evidence>
<sequence>MRKIGIIGGTFDPPHYGHLLIANEVYHALNLEEVWFLPNQIPPHKQGRNITSVESRLQMLELATEAEEHFSICLEELSRKGPSYTYDTMLQLTKKYPDVQFHFIIGGDMVEYLPKWYNIEALLDLVTFVGVARPGYKLRTPYPITTVEIPEFAVSSSLLRERYKEKKTCKYLLPEKVQVYIERNGLYES</sequence>
<name>NADD_BACHK</name>
<dbReference type="EC" id="2.7.7.18" evidence="1"/>
<dbReference type="EMBL" id="AE017355">
    <property type="protein sequence ID" value="AAT63594.1"/>
    <property type="molecule type" value="Genomic_DNA"/>
</dbReference>
<dbReference type="RefSeq" id="WP_001226053.1">
    <property type="nucleotide sequence ID" value="NC_005957.1"/>
</dbReference>
<dbReference type="RefSeq" id="YP_038386.1">
    <property type="nucleotide sequence ID" value="NC_005957.1"/>
</dbReference>
<dbReference type="SMR" id="Q6HDJ0"/>
<dbReference type="KEGG" id="btk:BT9727_4068"/>
<dbReference type="PATRIC" id="fig|281309.8.peg.4341"/>
<dbReference type="HOGENOM" id="CLU_069765_3_1_9"/>
<dbReference type="UniPathway" id="UPA00253">
    <property type="reaction ID" value="UER00332"/>
</dbReference>
<dbReference type="Proteomes" id="UP000001301">
    <property type="component" value="Chromosome"/>
</dbReference>
<dbReference type="GO" id="GO:0005524">
    <property type="term" value="F:ATP binding"/>
    <property type="evidence" value="ECO:0007669"/>
    <property type="project" value="UniProtKB-KW"/>
</dbReference>
<dbReference type="GO" id="GO:0004515">
    <property type="term" value="F:nicotinate-nucleotide adenylyltransferase activity"/>
    <property type="evidence" value="ECO:0007669"/>
    <property type="project" value="UniProtKB-UniRule"/>
</dbReference>
<dbReference type="GO" id="GO:0009435">
    <property type="term" value="P:NAD biosynthetic process"/>
    <property type="evidence" value="ECO:0007669"/>
    <property type="project" value="UniProtKB-UniRule"/>
</dbReference>
<dbReference type="CDD" id="cd02165">
    <property type="entry name" value="NMNAT"/>
    <property type="match status" value="1"/>
</dbReference>
<dbReference type="FunFam" id="3.40.50.620:FF:000079">
    <property type="entry name" value="Probable nicotinate-nucleotide adenylyltransferase"/>
    <property type="match status" value="1"/>
</dbReference>
<dbReference type="Gene3D" id="3.40.50.620">
    <property type="entry name" value="HUPs"/>
    <property type="match status" value="1"/>
</dbReference>
<dbReference type="HAMAP" id="MF_00244">
    <property type="entry name" value="NaMN_adenylyltr"/>
    <property type="match status" value="1"/>
</dbReference>
<dbReference type="InterPro" id="IPR004821">
    <property type="entry name" value="Cyt_trans-like"/>
</dbReference>
<dbReference type="InterPro" id="IPR005248">
    <property type="entry name" value="NadD/NMNAT"/>
</dbReference>
<dbReference type="InterPro" id="IPR014729">
    <property type="entry name" value="Rossmann-like_a/b/a_fold"/>
</dbReference>
<dbReference type="NCBIfam" id="TIGR00125">
    <property type="entry name" value="cyt_tran_rel"/>
    <property type="match status" value="1"/>
</dbReference>
<dbReference type="NCBIfam" id="TIGR00482">
    <property type="entry name" value="nicotinate (nicotinamide) nucleotide adenylyltransferase"/>
    <property type="match status" value="1"/>
</dbReference>
<dbReference type="NCBIfam" id="NF000840">
    <property type="entry name" value="PRK00071.1-3"/>
    <property type="match status" value="1"/>
</dbReference>
<dbReference type="NCBIfam" id="NF000841">
    <property type="entry name" value="PRK00071.1-4"/>
    <property type="match status" value="1"/>
</dbReference>
<dbReference type="PANTHER" id="PTHR39321">
    <property type="entry name" value="NICOTINATE-NUCLEOTIDE ADENYLYLTRANSFERASE-RELATED"/>
    <property type="match status" value="1"/>
</dbReference>
<dbReference type="PANTHER" id="PTHR39321:SF3">
    <property type="entry name" value="PHOSPHOPANTETHEINE ADENYLYLTRANSFERASE"/>
    <property type="match status" value="1"/>
</dbReference>
<dbReference type="Pfam" id="PF01467">
    <property type="entry name" value="CTP_transf_like"/>
    <property type="match status" value="1"/>
</dbReference>
<dbReference type="SUPFAM" id="SSF52374">
    <property type="entry name" value="Nucleotidylyl transferase"/>
    <property type="match status" value="1"/>
</dbReference>
<feature type="chain" id="PRO_0000181384" description="Probable nicotinate-nucleotide adenylyltransferase">
    <location>
        <begin position="1"/>
        <end position="189"/>
    </location>
</feature>
<reference key="1">
    <citation type="journal article" date="2006" name="J. Bacteriol.">
        <title>Pathogenomic sequence analysis of Bacillus cereus and Bacillus thuringiensis isolates closely related to Bacillus anthracis.</title>
        <authorList>
            <person name="Han C.S."/>
            <person name="Xie G."/>
            <person name="Challacombe J.F."/>
            <person name="Altherr M.R."/>
            <person name="Bhotika S.S."/>
            <person name="Bruce D."/>
            <person name="Campbell C.S."/>
            <person name="Campbell M.L."/>
            <person name="Chen J."/>
            <person name="Chertkov O."/>
            <person name="Cleland C."/>
            <person name="Dimitrijevic M."/>
            <person name="Doggett N.A."/>
            <person name="Fawcett J.J."/>
            <person name="Glavina T."/>
            <person name="Goodwin L.A."/>
            <person name="Hill K.K."/>
            <person name="Hitchcock P."/>
            <person name="Jackson P.J."/>
            <person name="Keim P."/>
            <person name="Kewalramani A.R."/>
            <person name="Longmire J."/>
            <person name="Lucas S."/>
            <person name="Malfatti S."/>
            <person name="McMurry K."/>
            <person name="Meincke L.J."/>
            <person name="Misra M."/>
            <person name="Moseman B.L."/>
            <person name="Mundt M."/>
            <person name="Munk A.C."/>
            <person name="Okinaka R.T."/>
            <person name="Parson-Quintana B."/>
            <person name="Reilly L.P."/>
            <person name="Richardson P."/>
            <person name="Robinson D.L."/>
            <person name="Rubin E."/>
            <person name="Saunders E."/>
            <person name="Tapia R."/>
            <person name="Tesmer J.G."/>
            <person name="Thayer N."/>
            <person name="Thompson L.S."/>
            <person name="Tice H."/>
            <person name="Ticknor L.O."/>
            <person name="Wills P.L."/>
            <person name="Brettin T.S."/>
            <person name="Gilna P."/>
        </authorList>
    </citation>
    <scope>NUCLEOTIDE SEQUENCE [LARGE SCALE GENOMIC DNA]</scope>
    <source>
        <strain>97-27</strain>
    </source>
</reference>
<gene>
    <name evidence="1" type="primary">nadD</name>
    <name type="ordered locus">BT9727_4068</name>
</gene>
<proteinExistence type="inferred from homology"/>
<keyword id="KW-0067">ATP-binding</keyword>
<keyword id="KW-0520">NAD</keyword>
<keyword id="KW-0547">Nucleotide-binding</keyword>
<keyword id="KW-0548">Nucleotidyltransferase</keyword>
<keyword id="KW-0662">Pyridine nucleotide biosynthesis</keyword>
<keyword id="KW-0808">Transferase</keyword>
<accession>Q6HDJ0</accession>
<protein>
    <recommendedName>
        <fullName evidence="1">Probable nicotinate-nucleotide adenylyltransferase</fullName>
        <ecNumber evidence="1">2.7.7.18</ecNumber>
    </recommendedName>
    <alternativeName>
        <fullName evidence="1">Deamido-NAD(+) diphosphorylase</fullName>
    </alternativeName>
    <alternativeName>
        <fullName evidence="1">Deamido-NAD(+) pyrophosphorylase</fullName>
    </alternativeName>
    <alternativeName>
        <fullName evidence="1">Nicotinate mononucleotide adenylyltransferase</fullName>
        <shortName evidence="1">NaMN adenylyltransferase</shortName>
    </alternativeName>
</protein>